<sequence>MALIDVAISCLNSIREIEEDVKDAIVYIDAGCTESFQFVGAFPLFLELGARAVCSLENMTSLDAVADWNSKSDCAKRIVIMTSRLLNDAHRYMLRCLSTHEGVQRCTVFTSISEGSHSAIPDSPLGPDAYREYETLLVQDYNEHTKKSDKISKDKGVSKFSSALESLTMEPIESENVDISSGGAQGLVVSVHHFPLIICPFTPRAFVLPSQGSVAEASLSRQHEDSLSFGLPPISTGSMSDTDDVPPGATLTAHFLYQLALKMELKLEIFSLGDQSKNVGKILTDMSSVYDVARRKRSAGLLLVDRTLDLITPCCHGDSLFDRIFSSLPRAERFSSQAQLKQGVPSINRPSLDVQVPLGELLNEEPSKIRDSGLPEGIEAFLRGWDSYTSAPQNVGLFNECDKKSTTNWTELLNGSLVATECFRGTPYLEAMIDRKTKDGSVLVKKWLQEALRRENISVNVRARPGYATKPELQAMIKALSQSQSSLLKNKGIIQLGAATAAALDESQSAKWDTFSSAEMMLNVSAGDTSQGLAAQISDLINKSAVAELQAKKNEKPDSSSRGLLSFRDALLLTIVGYILAGENFPTSGSGGPFSWQEEHFLKEAIVDAVLENPSAGNLKFLNGLTEELEGRLNRLKSEETKEIPSDDQLDIDALDDDPWGKWGDEEEEEVDNSKADESYDDMQLKLDLRDRVDSLFRFLHKLSSLRTRNLPLREGSLASESSFPGEPSGNKGLVYRLITKVLSKQEIPGLEYHSSTVGRFIKSGFGRFGLGQAKPSLADQSVILVFVIGGINGIEVLEAQEAVSESGRPDINLVIGGTTLLTPDDMFELLLGQFSHF</sequence>
<reference key="1">
    <citation type="journal article" date="1999" name="Nature">
        <title>Sequence and analysis of chromosome 2 of the plant Arabidopsis thaliana.</title>
        <authorList>
            <person name="Lin X."/>
            <person name="Kaul S."/>
            <person name="Rounsley S.D."/>
            <person name="Shea T.P."/>
            <person name="Benito M.-I."/>
            <person name="Town C.D."/>
            <person name="Fujii C.Y."/>
            <person name="Mason T.M."/>
            <person name="Bowman C.L."/>
            <person name="Barnstead M.E."/>
            <person name="Feldblyum T.V."/>
            <person name="Buell C.R."/>
            <person name="Ketchum K.A."/>
            <person name="Lee J.J."/>
            <person name="Ronning C.M."/>
            <person name="Koo H.L."/>
            <person name="Moffat K.S."/>
            <person name="Cronin L.A."/>
            <person name="Shen M."/>
            <person name="Pai G."/>
            <person name="Van Aken S."/>
            <person name="Umayam L."/>
            <person name="Tallon L.J."/>
            <person name="Gill J.E."/>
            <person name="Adams M.D."/>
            <person name="Carrera A.J."/>
            <person name="Creasy T.H."/>
            <person name="Goodman H.M."/>
            <person name="Somerville C.R."/>
            <person name="Copenhaver G.P."/>
            <person name="Preuss D."/>
            <person name="Nierman W.C."/>
            <person name="White O."/>
            <person name="Eisen J.A."/>
            <person name="Salzberg S.L."/>
            <person name="Fraser C.M."/>
            <person name="Venter J.C."/>
        </authorList>
    </citation>
    <scope>NUCLEOTIDE SEQUENCE [LARGE SCALE GENOMIC DNA]</scope>
    <source>
        <strain>cv. Columbia</strain>
    </source>
</reference>
<reference key="2">
    <citation type="journal article" date="2017" name="Plant J.">
        <title>Araport11: a complete reannotation of the Arabidopsis thaliana reference genome.</title>
        <authorList>
            <person name="Cheng C.Y."/>
            <person name="Krishnakumar V."/>
            <person name="Chan A.P."/>
            <person name="Thibaud-Nissen F."/>
            <person name="Schobel S."/>
            <person name="Town C.D."/>
        </authorList>
    </citation>
    <scope>GENOME REANNOTATION</scope>
    <source>
        <strain>cv. Columbia</strain>
    </source>
</reference>
<reference key="3">
    <citation type="journal article" date="2013" name="Plant J.">
        <title>MAG2 and three MAG2-INTERACTING PROTEINs form an ER-localized complex to facilitate storage protein transport in Arabidopsis thaliana.</title>
        <authorList>
            <person name="Li L."/>
            <person name="Shimada T."/>
            <person name="Takahashi H."/>
            <person name="Koumoto Y."/>
            <person name="Shirakawa M."/>
            <person name="Takagi J."/>
            <person name="Zhao X."/>
            <person name="Tu B."/>
            <person name="Jin H."/>
            <person name="Shen Z."/>
            <person name="Han B."/>
            <person name="Jia M."/>
            <person name="Kondo M."/>
            <person name="Nishimura M."/>
            <person name="Hara-Nishimura I."/>
        </authorList>
    </citation>
    <scope>IDENTIFICATION BY MASS SPECTROMETRY</scope>
    <scope>FUNCTION</scope>
    <scope>INTERACTION WITH MAG2</scope>
    <scope>DISRUPTION PHENOTYPE</scope>
</reference>
<name>MIP3_ARATH</name>
<comment type="function">
    <text evidence="2">Required for proper maturation of seed storage proteins. Forms a complex with MAG2, ZW10/MIP1 and MIP2 on the endoplasmic reticulum that may be responsible for efficient transport of seed storage proteins.</text>
</comment>
<comment type="subunit">
    <text evidence="2">Forms a complex with MAG2, ZW10/MIP1 and MIP2 on the endoplasmic reticulum.</text>
</comment>
<comment type="subcellular location">
    <subcellularLocation>
        <location evidence="5">Endoplasmic reticulum membrane</location>
        <topology evidence="5">Peripheral membrane protein</topology>
    </subcellularLocation>
</comment>
<comment type="alternative products">
    <event type="alternative splicing"/>
    <isoform>
        <id>F4IP69-1</id>
        <name>1</name>
        <sequence type="displayed"/>
    </isoform>
    <text>A number of isoforms are produced. According to EST sequences.</text>
</comment>
<comment type="disruption phenotype">
    <text evidence="2">Accumulation of the precursors of the two major storage proteins albumin 2S and globulin 12S in dry seeds.</text>
</comment>
<comment type="similarity">
    <text evidence="4">Belongs to the STXBP/unc-18/SEC1 family.</text>
</comment>
<comment type="sequence caution" evidence="4">
    <conflict type="erroneous gene model prediction">
        <sequence resource="EMBL-CDS" id="AAD21736"/>
    </conflict>
</comment>
<comment type="sequence caution" evidence="4">
    <conflict type="erroneous gene model prediction">
        <sequence resource="EMBL-CDS" id="AAM15390"/>
    </conflict>
</comment>
<evidence type="ECO:0000256" key="1">
    <source>
        <dbReference type="SAM" id="MobiDB-lite"/>
    </source>
</evidence>
<evidence type="ECO:0000269" key="2">
    <source>
    </source>
</evidence>
<evidence type="ECO:0000303" key="3">
    <source>
    </source>
</evidence>
<evidence type="ECO:0000305" key="4"/>
<evidence type="ECO:0000305" key="5">
    <source>
    </source>
</evidence>
<evidence type="ECO:0000312" key="6">
    <source>
        <dbReference type="Araport" id="AT2G42700"/>
    </source>
</evidence>
<evidence type="ECO:0000312" key="7">
    <source>
        <dbReference type="EMBL" id="AEC10157.1"/>
    </source>
</evidence>
<organism evidence="7">
    <name type="scientific">Arabidopsis thaliana</name>
    <name type="common">Mouse-ear cress</name>
    <dbReference type="NCBI Taxonomy" id="3702"/>
    <lineage>
        <taxon>Eukaryota</taxon>
        <taxon>Viridiplantae</taxon>
        <taxon>Streptophyta</taxon>
        <taxon>Embryophyta</taxon>
        <taxon>Tracheophyta</taxon>
        <taxon>Spermatophyta</taxon>
        <taxon>Magnoliopsida</taxon>
        <taxon>eudicotyledons</taxon>
        <taxon>Gunneridae</taxon>
        <taxon>Pentapetalae</taxon>
        <taxon>rosids</taxon>
        <taxon>malvids</taxon>
        <taxon>Brassicales</taxon>
        <taxon>Brassicaceae</taxon>
        <taxon>Camelineae</taxon>
        <taxon>Arabidopsis</taxon>
    </lineage>
</organism>
<protein>
    <recommendedName>
        <fullName evidence="4">Sec1 family domain-containing protein MIP3</fullName>
    </recommendedName>
    <alternativeName>
        <fullName evidence="3">MAG2-interacting protein 3</fullName>
    </alternativeName>
</protein>
<feature type="chain" id="PRO_0000430535" description="Sec1 family domain-containing protein MIP3">
    <location>
        <begin position="1"/>
        <end position="838"/>
    </location>
</feature>
<feature type="region of interest" description="Disordered" evidence="1">
    <location>
        <begin position="637"/>
        <end position="677"/>
    </location>
</feature>
<feature type="compositionally biased region" description="Acidic residues" evidence="1">
    <location>
        <begin position="646"/>
        <end position="658"/>
    </location>
</feature>
<gene>
    <name evidence="3" type="primary">MIP3</name>
    <name evidence="6" type="ordered locus">At2g42700</name>
    <name evidence="4" type="ORF">F14N22.4</name>
</gene>
<accession>F4IP69</accession>
<accession>Q9SJI6</accession>
<keyword id="KW-0025">Alternative splicing</keyword>
<keyword id="KW-0256">Endoplasmic reticulum</keyword>
<keyword id="KW-0472">Membrane</keyword>
<keyword id="KW-0653">Protein transport</keyword>
<keyword id="KW-1185">Reference proteome</keyword>
<keyword id="KW-0813">Transport</keyword>
<dbReference type="EMBL" id="AC006931">
    <property type="protein sequence ID" value="AAD21736.1"/>
    <property type="status" value="ALT_SEQ"/>
    <property type="molecule type" value="Genomic_DNA"/>
</dbReference>
<dbReference type="EMBL" id="AC007087">
    <property type="protein sequence ID" value="AAM15390.1"/>
    <property type="status" value="ALT_SEQ"/>
    <property type="molecule type" value="Genomic_DNA"/>
</dbReference>
<dbReference type="EMBL" id="CP002685">
    <property type="protein sequence ID" value="AEC10157.1"/>
    <property type="molecule type" value="Genomic_DNA"/>
</dbReference>
<dbReference type="PIR" id="B84857">
    <property type="entry name" value="B84857"/>
</dbReference>
<dbReference type="RefSeq" id="NP_181798.2">
    <molecule id="F4IP69-1"/>
    <property type="nucleotide sequence ID" value="NM_129831.5"/>
</dbReference>
<dbReference type="BioGRID" id="4207">
    <property type="interactions" value="2"/>
</dbReference>
<dbReference type="FunCoup" id="F4IP69">
    <property type="interactions" value="3843"/>
</dbReference>
<dbReference type="IntAct" id="F4IP69">
    <property type="interactions" value="1"/>
</dbReference>
<dbReference type="STRING" id="3702.F4IP69"/>
<dbReference type="iPTMnet" id="F4IP69"/>
<dbReference type="PaxDb" id="3702-AT2G42700.2"/>
<dbReference type="EnsemblPlants" id="AT2G42700.1">
    <molecule id="F4IP69-1"/>
    <property type="protein sequence ID" value="AT2G42700.1"/>
    <property type="gene ID" value="AT2G42700"/>
</dbReference>
<dbReference type="GeneID" id="818870"/>
<dbReference type="Gramene" id="AT2G42700.1">
    <molecule id="F4IP69-1"/>
    <property type="protein sequence ID" value="AT2G42700.1"/>
    <property type="gene ID" value="AT2G42700"/>
</dbReference>
<dbReference type="KEGG" id="ath:AT2G42700"/>
<dbReference type="Araport" id="AT2G42700"/>
<dbReference type="TAIR" id="AT2G42700">
    <property type="gene designation" value="MIP3"/>
</dbReference>
<dbReference type="eggNOG" id="ENOG502QQIB">
    <property type="taxonomic scope" value="Eukaryota"/>
</dbReference>
<dbReference type="HOGENOM" id="CLU_017469_0_0_1"/>
<dbReference type="InParanoid" id="F4IP69"/>
<dbReference type="OMA" id="FHEYESL"/>
<dbReference type="OrthoDB" id="549905at2759"/>
<dbReference type="PRO" id="PR:F4IP69"/>
<dbReference type="Proteomes" id="UP000006548">
    <property type="component" value="Chromosome 2"/>
</dbReference>
<dbReference type="ExpressionAtlas" id="F4IP69">
    <property type="expression patterns" value="baseline and differential"/>
</dbReference>
<dbReference type="GO" id="GO:0005789">
    <property type="term" value="C:endoplasmic reticulum membrane"/>
    <property type="evidence" value="ECO:0007669"/>
    <property type="project" value="UniProtKB-SubCell"/>
</dbReference>
<dbReference type="GO" id="GO:0005773">
    <property type="term" value="C:vacuole"/>
    <property type="evidence" value="ECO:0007669"/>
    <property type="project" value="GOC"/>
</dbReference>
<dbReference type="GO" id="GO:0051604">
    <property type="term" value="P:protein maturation"/>
    <property type="evidence" value="ECO:0000315"/>
    <property type="project" value="UniProtKB"/>
</dbReference>
<dbReference type="GO" id="GO:0015031">
    <property type="term" value="P:protein transport"/>
    <property type="evidence" value="ECO:0007669"/>
    <property type="project" value="UniProtKB-KW"/>
</dbReference>
<dbReference type="GO" id="GO:0006624">
    <property type="term" value="P:vacuolar protein processing"/>
    <property type="evidence" value="ECO:0000304"/>
    <property type="project" value="UniProtKB"/>
</dbReference>
<dbReference type="GO" id="GO:0016192">
    <property type="term" value="P:vesicle-mediated transport"/>
    <property type="evidence" value="ECO:0007669"/>
    <property type="project" value="InterPro"/>
</dbReference>
<dbReference type="Gene3D" id="3.40.50.1910">
    <property type="match status" value="1"/>
</dbReference>
<dbReference type="InterPro" id="IPR001619">
    <property type="entry name" value="Sec1-like"/>
</dbReference>
<dbReference type="InterPro" id="IPR027482">
    <property type="entry name" value="Sec1-like_dom2"/>
</dbReference>
<dbReference type="InterPro" id="IPR036045">
    <property type="entry name" value="Sec1-like_sf"/>
</dbReference>
<dbReference type="PANTHER" id="PTHR11679">
    <property type="entry name" value="VESICLE PROTEIN SORTING-ASSOCIATED"/>
    <property type="match status" value="1"/>
</dbReference>
<dbReference type="SUPFAM" id="SSF56815">
    <property type="entry name" value="Sec1/munc18-like (SM) proteins"/>
    <property type="match status" value="2"/>
</dbReference>
<proteinExistence type="evidence at protein level"/>